<name>NEC1_VZVD</name>
<comment type="function">
    <text evidence="1">Plays an essential role in virion nuclear egress, the first step of virion release from infected cell. Within the host nucleus, NEC1 interacts with the newly formed capsid through the vertexes and directs it to the inner nuclear membrane by associating with NEC2. Induces the budding of the capsid at the inner nuclear membrane as well as its envelopment into the perinuclear space. There, the NEC1/NEC2 complex promotes the fusion of the enveloped capsid with the outer nuclear membrane and the subsequent release of the viral capsid into the cytoplasm where it will reach the secondary budding sites in the host Golgi or trans-Golgi network.</text>
</comment>
<comment type="subunit">
    <text evidence="1">Forms a heterohexameric complex with NEC2. Interacts with capsid vertex specific component 2/CVC2; this interaction directs the capsid to the host inner nuclear membrane to initiate budding.</text>
</comment>
<comment type="subcellular location">
    <subcellularLocation>
        <location evidence="1">Host nucleus inner membrane</location>
    </subcellularLocation>
    <text evidence="1">Remains attached to the nucleus inner membrane through interaction with NEC2.</text>
</comment>
<comment type="PTM">
    <text evidence="1">Phosphorylated at serine residues in the N-terminus. This phosphorylation regulates the localization within the inner nuclear membrane.</text>
</comment>
<comment type="similarity">
    <text evidence="1">Belongs to the herpesviridae NEC1 protein family.</text>
</comment>
<protein>
    <recommendedName>
        <fullName evidence="1">Nuclear egress protein 1</fullName>
    </recommendedName>
</protein>
<accession>P09283</accession>
<organism>
    <name type="scientific">Varicella-zoster virus (strain Dumas)</name>
    <name type="common">HHV-3</name>
    <name type="synonym">Human herpesvirus 3</name>
    <dbReference type="NCBI Taxonomy" id="10338"/>
    <lineage>
        <taxon>Viruses</taxon>
        <taxon>Duplodnaviria</taxon>
        <taxon>Heunggongvirae</taxon>
        <taxon>Peploviricota</taxon>
        <taxon>Herviviricetes</taxon>
        <taxon>Herpesvirales</taxon>
        <taxon>Orthoherpesviridae</taxon>
        <taxon>Alphaherpesvirinae</taxon>
        <taxon>Varicellovirus</taxon>
        <taxon>Varicellovirus humanalpha3</taxon>
        <taxon>Human herpesvirus 3</taxon>
    </lineage>
</organism>
<sequence length="333" mass="38236">MHLKPTRFFHANQPPMPHSYEMEDLCFDDMQYRWSPSNTPYRSMSRRYKSVSRSGPSMRVRSRTPCRRQTIRGKLMSKERSVYRHYFNYIARSPPEELATVRGLIVPIIKTTPVTLPFNLGQTVADNCLSLSGMGYHLGLGGYCPTCTASGEPRLCRTDRAALILAYVQQLNNIYEYRVFLASILALSDRANMQAASAEPLLSSVLAQPELFFMYHIMREGGMRDIRVLFYRDGDAGGFMMYVIFPGKSVHLHYRLIDHIQAACRGYKIVAHVWQTTFLLSVCRNPEQQTETVVPSIGTSDVYCKMCDLNFDGELLLEYKRLYALFDDFVPPR</sequence>
<organismHost>
    <name type="scientific">Homo sapiens</name>
    <name type="common">Human</name>
    <dbReference type="NCBI Taxonomy" id="9606"/>
</organismHost>
<keyword id="KW-1043">Host membrane</keyword>
<keyword id="KW-1048">Host nucleus</keyword>
<keyword id="KW-0472">Membrane</keyword>
<keyword id="KW-0479">Metal-binding</keyword>
<keyword id="KW-0597">Phosphoprotein</keyword>
<keyword id="KW-1185">Reference proteome</keyword>
<keyword id="KW-0862">Zinc</keyword>
<keyword id="KW-0863">Zinc-finger</keyword>
<proteinExistence type="inferred from homology"/>
<feature type="chain" id="PRO_0000116010" description="Nuclear egress protein 1">
    <location>
        <begin position="1"/>
        <end position="333"/>
    </location>
</feature>
<feature type="zinc finger region" description="CCCH-type" evidence="1">
    <location>
        <begin position="128"/>
        <end position="251"/>
    </location>
</feature>
<feature type="region of interest" description="Disordered" evidence="2">
    <location>
        <begin position="45"/>
        <end position="64"/>
    </location>
</feature>
<evidence type="ECO:0000255" key="1">
    <source>
        <dbReference type="HAMAP-Rule" id="MF_04023"/>
    </source>
</evidence>
<evidence type="ECO:0000256" key="2">
    <source>
        <dbReference type="SAM" id="MobiDB-lite"/>
    </source>
</evidence>
<reference key="1">
    <citation type="journal article" date="1986" name="J. Gen. Virol.">
        <title>The complete DNA sequence of varicella-zoster virus.</title>
        <authorList>
            <person name="Davison A.J."/>
            <person name="Scott J.E."/>
        </authorList>
    </citation>
    <scope>NUCLEOTIDE SEQUENCE [LARGE SCALE GENOMIC DNA]</scope>
</reference>
<gene>
    <name evidence="1" type="primary">NEC1</name>
    <name type="ordered locus">27</name>
</gene>
<dbReference type="EMBL" id="X04370">
    <property type="protein sequence ID" value="CAA27910.1"/>
    <property type="molecule type" value="Genomic_DNA"/>
</dbReference>
<dbReference type="PIR" id="A27214">
    <property type="entry name" value="WZBE27"/>
</dbReference>
<dbReference type="SMR" id="P09283"/>
<dbReference type="Proteomes" id="UP000002602">
    <property type="component" value="Genome"/>
</dbReference>
<dbReference type="GO" id="GO:0044201">
    <property type="term" value="C:host cell nuclear inner membrane"/>
    <property type="evidence" value="ECO:0007669"/>
    <property type="project" value="UniProtKB-SubCell"/>
</dbReference>
<dbReference type="GO" id="GO:0016020">
    <property type="term" value="C:membrane"/>
    <property type="evidence" value="ECO:0007669"/>
    <property type="project" value="UniProtKB-KW"/>
</dbReference>
<dbReference type="GO" id="GO:0008270">
    <property type="term" value="F:zinc ion binding"/>
    <property type="evidence" value="ECO:0007669"/>
    <property type="project" value="UniProtKB-KW"/>
</dbReference>
<dbReference type="GO" id="GO:0046765">
    <property type="term" value="P:viral budding from nuclear membrane"/>
    <property type="evidence" value="ECO:0007669"/>
    <property type="project" value="InterPro"/>
</dbReference>
<dbReference type="HAMAP" id="MF_04023">
    <property type="entry name" value="HSV_NEC1"/>
    <property type="match status" value="1"/>
</dbReference>
<dbReference type="InterPro" id="IPR021152">
    <property type="entry name" value="Herpes_UL31"/>
</dbReference>
<dbReference type="Pfam" id="PF02718">
    <property type="entry name" value="Herpes_UL31"/>
    <property type="match status" value="1"/>
</dbReference>